<organism>
    <name type="scientific">Escherichia coli (strain ATCC 8739 / DSM 1576 / NBRC 3972 / NCIMB 8545 / WDCM 00012 / Crooks)</name>
    <dbReference type="NCBI Taxonomy" id="481805"/>
    <lineage>
        <taxon>Bacteria</taxon>
        <taxon>Pseudomonadati</taxon>
        <taxon>Pseudomonadota</taxon>
        <taxon>Gammaproteobacteria</taxon>
        <taxon>Enterobacterales</taxon>
        <taxon>Enterobacteriaceae</taxon>
        <taxon>Escherichia</taxon>
    </lineage>
</organism>
<reference key="1">
    <citation type="submission" date="2008-02" db="EMBL/GenBank/DDBJ databases">
        <title>Complete sequence of Escherichia coli C str. ATCC 8739.</title>
        <authorList>
            <person name="Copeland A."/>
            <person name="Lucas S."/>
            <person name="Lapidus A."/>
            <person name="Glavina del Rio T."/>
            <person name="Dalin E."/>
            <person name="Tice H."/>
            <person name="Bruce D."/>
            <person name="Goodwin L."/>
            <person name="Pitluck S."/>
            <person name="Kiss H."/>
            <person name="Brettin T."/>
            <person name="Detter J.C."/>
            <person name="Han C."/>
            <person name="Kuske C.R."/>
            <person name="Schmutz J."/>
            <person name="Larimer F."/>
            <person name="Land M."/>
            <person name="Hauser L."/>
            <person name="Kyrpides N."/>
            <person name="Mikhailova N."/>
            <person name="Ingram L."/>
            <person name="Richardson P."/>
        </authorList>
    </citation>
    <scope>NUCLEOTIDE SEQUENCE [LARGE SCALE GENOMIC DNA]</scope>
    <source>
        <strain>ATCC 8739 / DSM 1576 / NBRC 3972 / NCIMB 8545 / WDCM 00012 / Crooks</strain>
    </source>
</reference>
<evidence type="ECO:0000255" key="1">
    <source>
        <dbReference type="HAMAP-Rule" id="MF_00720"/>
    </source>
</evidence>
<name>PRIB_ECOLC</name>
<dbReference type="EMBL" id="CP000946">
    <property type="protein sequence ID" value="ACA79416.1"/>
    <property type="molecule type" value="Genomic_DNA"/>
</dbReference>
<dbReference type="RefSeq" id="WP_001296681.1">
    <property type="nucleotide sequence ID" value="NZ_MTFT01000012.1"/>
</dbReference>
<dbReference type="SMR" id="B1IT05"/>
<dbReference type="GeneID" id="93777622"/>
<dbReference type="KEGG" id="ecl:EcolC_3812"/>
<dbReference type="HOGENOM" id="CLU_166075_0_0_6"/>
<dbReference type="GO" id="GO:1990077">
    <property type="term" value="C:primosome complex"/>
    <property type="evidence" value="ECO:0007669"/>
    <property type="project" value="UniProtKB-KW"/>
</dbReference>
<dbReference type="GO" id="GO:0003697">
    <property type="term" value="F:single-stranded DNA binding"/>
    <property type="evidence" value="ECO:0007669"/>
    <property type="project" value="UniProtKB-UniRule"/>
</dbReference>
<dbReference type="GO" id="GO:0006269">
    <property type="term" value="P:DNA replication, synthesis of primer"/>
    <property type="evidence" value="ECO:0007669"/>
    <property type="project" value="UniProtKB-KW"/>
</dbReference>
<dbReference type="CDD" id="cd04496">
    <property type="entry name" value="SSB_OBF"/>
    <property type="match status" value="1"/>
</dbReference>
<dbReference type="FunFam" id="2.40.50.140:FF:000077">
    <property type="entry name" value="Primosomal replication protein N"/>
    <property type="match status" value="1"/>
</dbReference>
<dbReference type="Gene3D" id="2.40.50.140">
    <property type="entry name" value="Nucleic acid-binding proteins"/>
    <property type="match status" value="1"/>
</dbReference>
<dbReference type="HAMAP" id="MF_00720">
    <property type="entry name" value="PriB"/>
    <property type="match status" value="1"/>
</dbReference>
<dbReference type="InterPro" id="IPR012340">
    <property type="entry name" value="NA-bd_OB-fold"/>
</dbReference>
<dbReference type="InterPro" id="IPR000424">
    <property type="entry name" value="Primosome_PriB/ssb"/>
</dbReference>
<dbReference type="InterPro" id="IPR023646">
    <property type="entry name" value="Prisomal_replication_PriB"/>
</dbReference>
<dbReference type="NCBIfam" id="TIGR04418">
    <property type="entry name" value="PriB_gamma"/>
    <property type="match status" value="1"/>
</dbReference>
<dbReference type="Pfam" id="PF22657">
    <property type="entry name" value="SSB_1"/>
    <property type="match status" value="1"/>
</dbReference>
<dbReference type="PIRSF" id="PIRSF003135">
    <property type="entry name" value="Primosomal_n"/>
    <property type="match status" value="1"/>
</dbReference>
<dbReference type="SUPFAM" id="SSF50249">
    <property type="entry name" value="Nucleic acid-binding proteins"/>
    <property type="match status" value="1"/>
</dbReference>
<dbReference type="PROSITE" id="PS50935">
    <property type="entry name" value="SSB"/>
    <property type="match status" value="1"/>
</dbReference>
<feature type="chain" id="PRO_1000083277" description="Replication restart protein PriB">
    <location>
        <begin position="1"/>
        <end position="104"/>
    </location>
</feature>
<feature type="domain" description="SSB" evidence="1">
    <location>
        <begin position="1"/>
        <end position="101"/>
    </location>
</feature>
<gene>
    <name evidence="1" type="primary">priB</name>
    <name type="ordered locus">EcolC_3812</name>
</gene>
<proteinExistence type="inferred from homology"/>
<sequence>MTNRLVLSGTVCRTPLRKVSPSGIPHCQFVLEHRSVQEEAGFHRQAWCQMPVIVSGHENQAITHSITVGSRITVQGFISCHKAKNGLSKMVLHAEQIELIDSGD</sequence>
<keyword id="KW-0235">DNA replication</keyword>
<keyword id="KW-0238">DNA-binding</keyword>
<keyword id="KW-0639">Primosome</keyword>
<accession>B1IT05</accession>
<protein>
    <recommendedName>
        <fullName evidence="1">Replication restart protein PriB</fullName>
    </recommendedName>
</protein>
<comment type="function">
    <text evidence="1">Involved in the restart of stalled replication forks, which reloads the replicative helicase on sites other than the origin of replication; the PriA-PriB pathway is the major replication restart pathway. During primosome assembly it facilitates complex formation between PriA and DnaT on DNA; stabilizes PriA on DNA. Stimulates the DNA unwinding activity of PriA helicase.</text>
</comment>
<comment type="subunit">
    <text evidence="1">Homodimer. Interacts with PriA and DnaT. Component of the replication restart primosome. Primosome assembly occurs via a 'hand-off' mechanism. PriA binds to replication forks, subsequently PriB then DnaT bind; DnaT then displaces ssDNA to generate the helicase loading substrate.</text>
</comment>
<comment type="similarity">
    <text evidence="1">Belongs to the PriB family.</text>
</comment>